<protein>
    <recommendedName>
        <fullName evidence="1">Bifunctional protein Aas</fullName>
    </recommendedName>
    <domain>
        <recommendedName>
            <fullName evidence="1">2-acylglycerophosphoethanolamine acyltransferase</fullName>
            <ecNumber evidence="1">2.3.1.40</ecNumber>
        </recommendedName>
        <alternativeName>
            <fullName evidence="1">2-acyl-GPE acyltransferase</fullName>
        </alternativeName>
        <alternativeName>
            <fullName evidence="1">Acyl-[acyl-carrier-protein]--phospholipid O-acyltransferase</fullName>
        </alternativeName>
    </domain>
    <domain>
        <recommendedName>
            <fullName evidence="1">Acyl-[acyl-carrier-protein] synthetase</fullName>
            <ecNumber evidence="1">6.2.1.20</ecNumber>
        </recommendedName>
        <alternativeName>
            <fullName evidence="1">Acyl-ACP synthetase</fullName>
        </alternativeName>
        <alternativeName>
            <fullName evidence="1">Long-chain-fatty-acid--[acyl-carrier-protein] ligase</fullName>
        </alternativeName>
    </domain>
</protein>
<reference key="1">
    <citation type="journal article" date="2008" name="J. Bacteriol.">
        <title>The pangenome structure of Escherichia coli: comparative genomic analysis of E. coli commensal and pathogenic isolates.</title>
        <authorList>
            <person name="Rasko D.A."/>
            <person name="Rosovitz M.J."/>
            <person name="Myers G.S.A."/>
            <person name="Mongodin E.F."/>
            <person name="Fricke W.F."/>
            <person name="Gajer P."/>
            <person name="Crabtree J."/>
            <person name="Sebaihia M."/>
            <person name="Thomson N.R."/>
            <person name="Chaudhuri R."/>
            <person name="Henderson I.R."/>
            <person name="Sperandio V."/>
            <person name="Ravel J."/>
        </authorList>
    </citation>
    <scope>NUCLEOTIDE SEQUENCE [LARGE SCALE GENOMIC DNA]</scope>
    <source>
        <strain>E24377A / ETEC</strain>
    </source>
</reference>
<gene>
    <name evidence="1" type="primary">aas</name>
    <name type="ordered locus">EcE24377A_3156</name>
</gene>
<proteinExistence type="inferred from homology"/>
<keyword id="KW-0012">Acyltransferase</keyword>
<keyword id="KW-0067">ATP-binding</keyword>
<keyword id="KW-0997">Cell inner membrane</keyword>
<keyword id="KW-1003">Cell membrane</keyword>
<keyword id="KW-0436">Ligase</keyword>
<keyword id="KW-0472">Membrane</keyword>
<keyword id="KW-0511">Multifunctional enzyme</keyword>
<keyword id="KW-0547">Nucleotide-binding</keyword>
<keyword id="KW-1185">Reference proteome</keyword>
<keyword id="KW-0808">Transferase</keyword>
<keyword id="KW-0812">Transmembrane</keyword>
<keyword id="KW-1133">Transmembrane helix</keyword>
<evidence type="ECO:0000255" key="1">
    <source>
        <dbReference type="HAMAP-Rule" id="MF_01162"/>
    </source>
</evidence>
<sequence length="719" mass="80682">MLFSFFRNLCRVLYRVRVTGDTQALKGERVLITPNHVSFIDGILLGLFLPVRPVFAVYTSISQQWYMRWLKSFIDFVPLDPTQPMAIKHLVRLVEQGRPVVIFPEGRITTTGSLMKIYDGAGFVAAKSGATVIPVRIEGAELTHFSRLKGLVKRRLFPQITLHILPPTQVAMPDAPRARDRRKIAGEMLHQIMMEARMAVRPRETLYESLLSAMYRFGAGKKCVEDVNFTPDSYRKLLTKTLFVGRILEKYSVEGERIGLMLPNAGISAAVIFGAIARRRIPAMMNYTAGVKGLTSAITAAEIKTIFTSRQFLDKGKLWHLPEQLTQVRWVYLEDLKADVTTADKVWIFAHLLMPRLAQVKQQPEEEALILFTSGSEGHPKGVVHSHKSILANVEQIKTIADFTTNDRFMSALPLFHSFGLTVGLFTPLLTGAEVFLYPSPLHYRIVPELVYDRSCTVLFGTSTFLGHYARFANPYDFYRLRYVVAGAEKLQESTKQLWQDKFGLRILEGYGVTECAPVVSINVPMAAKPGTVGRILPGMDARLLSVPGIEEGGRLQLKGPNIMNGYLRVEKPGVLEVPTAENVRGEMERGWYDTGDIVRFDEQGFVQIQGRAKRFAKIAGEMVSLEMVEQLALGVSPDKVHATAIKSDASKGEALVLFTTDNELTRDKLQQYAREHGVPELAVPRDIRYLKQMPLLGSGKPDFVTLKSWVDEAEQHDE</sequence>
<feature type="chain" id="PRO_1000065634" description="Bifunctional protein Aas">
    <location>
        <begin position="1"/>
        <end position="719"/>
    </location>
</feature>
<feature type="transmembrane region" description="Helical" evidence="1">
    <location>
        <begin position="258"/>
        <end position="277"/>
    </location>
</feature>
<feature type="transmembrane region" description="Helical" evidence="1">
    <location>
        <begin position="409"/>
        <end position="433"/>
    </location>
</feature>
<feature type="region of interest" description="Acyltransferase">
    <location>
        <begin position="15"/>
        <end position="138"/>
    </location>
</feature>
<feature type="region of interest" description="AMP-binding">
    <location>
        <begin position="233"/>
        <end position="646"/>
    </location>
</feature>
<feature type="active site" evidence="1">
    <location>
        <position position="36"/>
    </location>
</feature>
<accession>A7ZQU2</accession>
<organism>
    <name type="scientific">Escherichia coli O139:H28 (strain E24377A / ETEC)</name>
    <dbReference type="NCBI Taxonomy" id="331111"/>
    <lineage>
        <taxon>Bacteria</taxon>
        <taxon>Pseudomonadati</taxon>
        <taxon>Pseudomonadota</taxon>
        <taxon>Gammaproteobacteria</taxon>
        <taxon>Enterobacterales</taxon>
        <taxon>Enterobacteriaceae</taxon>
        <taxon>Escherichia</taxon>
    </lineage>
</organism>
<name>AAS_ECO24</name>
<comment type="function">
    <text evidence="1">Plays a role in lysophospholipid acylation. Transfers fatty acids to the 1-position via an enzyme-bound acyl-ACP intermediate in the presence of ATP and magnesium. Its physiological function is to regenerate phosphatidylethanolamine from 2-acyl-glycero-3-phosphoethanolamine (2-acyl-GPE) formed by transacylation reactions or degradation by phospholipase A1.</text>
</comment>
<comment type="catalytic activity">
    <reaction evidence="1">
        <text>a 2-acyl-sn-glycero-3-phosphoethanolamine + a fatty acyl-[ACP] = a 1,2-diacyl-sn-glycero-3-phosphoethanolamine + holo-[ACP]</text>
        <dbReference type="Rhea" id="RHEA:10304"/>
        <dbReference type="Rhea" id="RHEA-COMP:9685"/>
        <dbReference type="Rhea" id="RHEA-COMP:14125"/>
        <dbReference type="ChEBI" id="CHEBI:64479"/>
        <dbReference type="ChEBI" id="CHEBI:64612"/>
        <dbReference type="ChEBI" id="CHEBI:65213"/>
        <dbReference type="ChEBI" id="CHEBI:138651"/>
        <dbReference type="EC" id="2.3.1.40"/>
    </reaction>
</comment>
<comment type="catalytic activity">
    <reaction evidence="1">
        <text>a long-chain fatty acid + holo-[ACP] + ATP = a long-chain fatty acyl-[ACP] + AMP + diphosphate</text>
        <dbReference type="Rhea" id="RHEA:45588"/>
        <dbReference type="Rhea" id="RHEA-COMP:9685"/>
        <dbReference type="Rhea" id="RHEA-COMP:12682"/>
        <dbReference type="ChEBI" id="CHEBI:30616"/>
        <dbReference type="ChEBI" id="CHEBI:33019"/>
        <dbReference type="ChEBI" id="CHEBI:57560"/>
        <dbReference type="ChEBI" id="CHEBI:64479"/>
        <dbReference type="ChEBI" id="CHEBI:133243"/>
        <dbReference type="ChEBI" id="CHEBI:456215"/>
        <dbReference type="EC" id="6.2.1.20"/>
    </reaction>
</comment>
<comment type="subcellular location">
    <subcellularLocation>
        <location evidence="1">Cell inner membrane</location>
        <topology evidence="1">Multi-pass membrane protein</topology>
    </subcellularLocation>
</comment>
<comment type="similarity">
    <text evidence="1">In the N-terminal section; belongs to the 2-acyl-GPE acetyltransferase family.</text>
</comment>
<comment type="similarity">
    <text evidence="1">In the C-terminal section; belongs to the ATP-dependent AMP-binding enzyme family.</text>
</comment>
<dbReference type="EC" id="2.3.1.40" evidence="1"/>
<dbReference type="EC" id="6.2.1.20" evidence="1"/>
<dbReference type="EMBL" id="CP000800">
    <property type="protein sequence ID" value="ABV17342.1"/>
    <property type="molecule type" value="Genomic_DNA"/>
</dbReference>
<dbReference type="RefSeq" id="WP_000899049.1">
    <property type="nucleotide sequence ID" value="NC_009801.1"/>
</dbReference>
<dbReference type="SMR" id="A7ZQU2"/>
<dbReference type="GeneID" id="75203772"/>
<dbReference type="KEGG" id="ecw:EcE24377A_3156"/>
<dbReference type="HOGENOM" id="CLU_000022_59_8_6"/>
<dbReference type="Proteomes" id="UP000001122">
    <property type="component" value="Chromosome"/>
</dbReference>
<dbReference type="GO" id="GO:0005886">
    <property type="term" value="C:plasma membrane"/>
    <property type="evidence" value="ECO:0007669"/>
    <property type="project" value="UniProtKB-SubCell"/>
</dbReference>
<dbReference type="GO" id="GO:0008779">
    <property type="term" value="F:acyl-[acyl-carrier-protein]-phospholipid O-acyltransferase activity"/>
    <property type="evidence" value="ECO:0007669"/>
    <property type="project" value="UniProtKB-UniRule"/>
</dbReference>
<dbReference type="GO" id="GO:0005524">
    <property type="term" value="F:ATP binding"/>
    <property type="evidence" value="ECO:0007669"/>
    <property type="project" value="UniProtKB-KW"/>
</dbReference>
<dbReference type="GO" id="GO:0008922">
    <property type="term" value="F:long-chain fatty acid [acyl-carrier-protein] ligase activity"/>
    <property type="evidence" value="ECO:0007669"/>
    <property type="project" value="UniProtKB-UniRule"/>
</dbReference>
<dbReference type="GO" id="GO:0031956">
    <property type="term" value="F:medium-chain fatty acid-CoA ligase activity"/>
    <property type="evidence" value="ECO:0007669"/>
    <property type="project" value="TreeGrafter"/>
</dbReference>
<dbReference type="GO" id="GO:0006631">
    <property type="term" value="P:fatty acid metabolic process"/>
    <property type="evidence" value="ECO:0007669"/>
    <property type="project" value="InterPro"/>
</dbReference>
<dbReference type="GO" id="GO:0008654">
    <property type="term" value="P:phospholipid biosynthetic process"/>
    <property type="evidence" value="ECO:0007669"/>
    <property type="project" value="InterPro"/>
</dbReference>
<dbReference type="CDD" id="cd05909">
    <property type="entry name" value="AAS_C"/>
    <property type="match status" value="1"/>
</dbReference>
<dbReference type="CDD" id="cd07989">
    <property type="entry name" value="LPLAT_AGPAT-like"/>
    <property type="match status" value="1"/>
</dbReference>
<dbReference type="FunFam" id="3.30.300.30:FF:000009">
    <property type="entry name" value="Bifunctional protein Aas"/>
    <property type="match status" value="1"/>
</dbReference>
<dbReference type="FunFam" id="3.40.50.12780:FF:000009">
    <property type="entry name" value="Bifunctional protein Aas"/>
    <property type="match status" value="1"/>
</dbReference>
<dbReference type="Gene3D" id="3.30.300.30">
    <property type="match status" value="1"/>
</dbReference>
<dbReference type="Gene3D" id="3.40.50.12780">
    <property type="entry name" value="N-terminal domain of ligase-like"/>
    <property type="match status" value="1"/>
</dbReference>
<dbReference type="HAMAP" id="MF_01162">
    <property type="entry name" value="Aas"/>
    <property type="match status" value="1"/>
</dbReference>
<dbReference type="InterPro" id="IPR023775">
    <property type="entry name" value="Aas"/>
</dbReference>
<dbReference type="InterPro" id="IPR045851">
    <property type="entry name" value="AMP-bd_C_sf"/>
</dbReference>
<dbReference type="InterPro" id="IPR020845">
    <property type="entry name" value="AMP-binding_CS"/>
</dbReference>
<dbReference type="InterPro" id="IPR000873">
    <property type="entry name" value="AMP-dep_synth/lig_dom"/>
</dbReference>
<dbReference type="InterPro" id="IPR042099">
    <property type="entry name" value="ANL_N_sf"/>
</dbReference>
<dbReference type="InterPro" id="IPR002123">
    <property type="entry name" value="Plipid/glycerol_acylTrfase"/>
</dbReference>
<dbReference type="NCBIfam" id="NF005959">
    <property type="entry name" value="PRK08043.1"/>
    <property type="match status" value="1"/>
</dbReference>
<dbReference type="PANTHER" id="PTHR43201">
    <property type="entry name" value="ACYL-COA SYNTHETASE"/>
    <property type="match status" value="1"/>
</dbReference>
<dbReference type="PANTHER" id="PTHR43201:SF8">
    <property type="entry name" value="ACYL-COA SYNTHETASE FAMILY MEMBER 3"/>
    <property type="match status" value="1"/>
</dbReference>
<dbReference type="Pfam" id="PF01553">
    <property type="entry name" value="Acyltransferase"/>
    <property type="match status" value="1"/>
</dbReference>
<dbReference type="Pfam" id="PF00501">
    <property type="entry name" value="AMP-binding"/>
    <property type="match status" value="1"/>
</dbReference>
<dbReference type="SMART" id="SM00563">
    <property type="entry name" value="PlsC"/>
    <property type="match status" value="1"/>
</dbReference>
<dbReference type="SUPFAM" id="SSF56801">
    <property type="entry name" value="Acetyl-CoA synthetase-like"/>
    <property type="match status" value="1"/>
</dbReference>
<dbReference type="SUPFAM" id="SSF69593">
    <property type="entry name" value="Glycerol-3-phosphate (1)-acyltransferase"/>
    <property type="match status" value="1"/>
</dbReference>
<dbReference type="PROSITE" id="PS00455">
    <property type="entry name" value="AMP_BINDING"/>
    <property type="match status" value="1"/>
</dbReference>